<accession>P18569</accession>
<keyword id="KW-0325">Glycoprotein</keyword>
<keyword id="KW-0328">Glycosyltransferase</keyword>
<keyword id="KW-1185">Reference proteome</keyword>
<keyword id="KW-0732">Signal</keyword>
<keyword id="KW-0808">Transferase</keyword>
<sequence length="506" mass="57033">MTILCWLALLSTLTAVNAANILAVFPTPAYSHHIVYKVYIEALAEKCHNVTVVKPKLFAYSTKTYCGNITEINADMSVEQYKKLVANSAMFRKRGVVSDTDTVTAANYLGLIEMFKDQFDNINVRNLIANNQTFDLVVVEAFADYALVFGHLYDPAPVIQIAPGYGLAENFDTVGAVARHPVHHPNIWRSNFDDTEANVMTEMRLYKEFKILANMSNALLKQQFGPNTPTIEKLRNKVQLLLLNLHPIFDNNRPVPPSVQYLGGGIHLVKSAPLTKLSPVINAQMNKSKSGTIYVSFGSSIDTKSFANEFLYMLINTFKTLDNYTILWKIDDEVVKNITLPANVITQNWFNQRAVLRHKKMAAFITQGGLQSSDEALEAGIPMVCLPMMGDQFYHAHKLQQLGVARALDTVTVSSDQLLVAINDVLFNAPTYKKHMAELYALINHDKATFPPLDKAIKFTERVIRYRHDISRQLYSLKTTAANVPYSNYYMYKSVFSIVMNHLTHF</sequence>
<comment type="function">
    <text evidence="2">Catalyzes the transfer of glucose from UDP-glucose to ecdysteroids which are insect molting hormones. Acts on the host at the organismal level to block its development, thereby increasing the yield of progeny virus.</text>
</comment>
<comment type="PTM">
    <text evidence="2">Glycosylated.</text>
</comment>
<comment type="similarity">
    <text evidence="3">Belongs to the UDP-glycosyltransferase family.</text>
</comment>
<dbReference type="EC" id="2.4.1.-"/>
<dbReference type="EMBL" id="M22619">
    <property type="protein sequence ID" value="AAA69845.1"/>
    <property type="molecule type" value="Genomic_DNA"/>
</dbReference>
<dbReference type="EMBL" id="L09723">
    <property type="protein sequence ID" value="AAA46712.1"/>
    <property type="molecule type" value="Genomic_DNA"/>
</dbReference>
<dbReference type="EMBL" id="M96361">
    <property type="protein sequence ID" value="AAA66785.1"/>
    <property type="molecule type" value="Genomic_DNA"/>
</dbReference>
<dbReference type="EMBL" id="L22858">
    <property type="protein sequence ID" value="AAA66645.1"/>
    <property type="molecule type" value="Genomic_DNA"/>
</dbReference>
<dbReference type="PIR" id="A34114">
    <property type="entry name" value="XUNVAC"/>
</dbReference>
<dbReference type="SMR" id="P18569"/>
<dbReference type="CAZy" id="GT1">
    <property type="family name" value="Glycosyltransferase Family 1"/>
</dbReference>
<dbReference type="KEGG" id="vg:1403847"/>
<dbReference type="OrthoDB" id="5462at10239"/>
<dbReference type="Proteomes" id="UP000008292">
    <property type="component" value="Segment"/>
</dbReference>
<dbReference type="GO" id="GO:0008194">
    <property type="term" value="F:UDP-glycosyltransferase activity"/>
    <property type="evidence" value="ECO:0007669"/>
    <property type="project" value="InterPro"/>
</dbReference>
<dbReference type="CDD" id="cd03784">
    <property type="entry name" value="GT1_Gtf-like"/>
    <property type="match status" value="1"/>
</dbReference>
<dbReference type="FunFam" id="3.40.50.2000:FF:000021">
    <property type="entry name" value="UDP-glucuronosyltransferase"/>
    <property type="match status" value="1"/>
</dbReference>
<dbReference type="Gene3D" id="3.40.50.2000">
    <property type="entry name" value="Glycogen Phosphorylase B"/>
    <property type="match status" value="1"/>
</dbReference>
<dbReference type="InterPro" id="IPR016224">
    <property type="entry name" value="Ecdysteroid_UDP-Glc_Trfase"/>
</dbReference>
<dbReference type="InterPro" id="IPR050271">
    <property type="entry name" value="UDP-glycosyltransferase"/>
</dbReference>
<dbReference type="InterPro" id="IPR002213">
    <property type="entry name" value="UDP_glucos_trans"/>
</dbReference>
<dbReference type="InterPro" id="IPR035595">
    <property type="entry name" value="UDP_glycos_trans_CS"/>
</dbReference>
<dbReference type="PANTHER" id="PTHR48043">
    <property type="entry name" value="EG:EG0003.4 PROTEIN-RELATED"/>
    <property type="match status" value="1"/>
</dbReference>
<dbReference type="PANTHER" id="PTHR48043:SF145">
    <property type="entry name" value="FI06409P-RELATED"/>
    <property type="match status" value="1"/>
</dbReference>
<dbReference type="Pfam" id="PF00201">
    <property type="entry name" value="UDPGT"/>
    <property type="match status" value="1"/>
</dbReference>
<dbReference type="PIRSF" id="PIRSF000476">
    <property type="entry name" value="Ecdystd_UDP_glucosyltfrase"/>
    <property type="match status" value="1"/>
</dbReference>
<dbReference type="SUPFAM" id="SSF53756">
    <property type="entry name" value="UDP-Glycosyltransferase/glycogen phosphorylase"/>
    <property type="match status" value="1"/>
</dbReference>
<dbReference type="PROSITE" id="PS00375">
    <property type="entry name" value="UDPGT"/>
    <property type="match status" value="1"/>
</dbReference>
<feature type="signal peptide" evidence="1">
    <location>
        <begin position="1"/>
        <end position="18"/>
    </location>
</feature>
<feature type="chain" id="PRO_0000036057" description="Ecdysteroid UDP-glucosyltransferase">
    <location>
        <begin position="19"/>
        <end position="506"/>
    </location>
</feature>
<organismHost>
    <name type="scientific">Lepidoptera</name>
    <name type="common">butterflies and moths</name>
    <dbReference type="NCBI Taxonomy" id="7088"/>
</organismHost>
<reference key="1">
    <citation type="journal article" date="1989" name="Science">
        <title>A baculovirus blocks insect molting by producing ecdysteroid UDP-glucosyl transferase.</title>
        <authorList>
            <person name="O'Reilly D.R."/>
            <person name="Miller L.K."/>
        </authorList>
    </citation>
    <scope>NUCLEOTIDE SEQUENCE [GENOMIC DNA]</scope>
    <source>
        <strain>L1</strain>
    </source>
</reference>
<reference key="2">
    <citation type="journal article" date="1990" name="J. Virol.">
        <title>Regulation of expression of a baculovirus ecdysteroid UDPglucosyltransferase gene.</title>
        <authorList>
            <person name="O'Reilly D.R."/>
            <person name="Miller L.K."/>
        </authorList>
    </citation>
    <scope>NUCLEOTIDE SEQUENCE [GENOMIC DNA]</scope>
    <source>
        <strain>L1</strain>
    </source>
</reference>
<reference key="3">
    <citation type="journal article" date="1994" name="Virology">
        <title>The complete DNA sequence of Autographa californica nuclear polyhedrosis virus.</title>
        <authorList>
            <person name="Ayres M.D."/>
            <person name="Howard S.C."/>
            <person name="Kuzio J."/>
            <person name="Lopez-Ferber M."/>
            <person name="Possee R.D."/>
        </authorList>
    </citation>
    <scope>NUCLEOTIDE SEQUENCE [LARGE SCALE GENOMIC DNA]</scope>
    <source>
        <strain>C6</strain>
    </source>
</reference>
<reference key="4">
    <citation type="journal article" date="1993" name="J. Virol.">
        <title>Identification and characterization of lef-1, a baculovirus gene involved in late and very late gene expression.</title>
        <authorList>
            <person name="Passarelli A.L."/>
            <person name="Miller L.K."/>
        </authorList>
    </citation>
    <scope>NUCLEOTIDE SEQUENCE [GENOMIC DNA] OF 1-87</scope>
    <source>
        <strain>L1</strain>
    </source>
</reference>
<reference key="5">
    <citation type="journal article" date="1999" name="J. Gen. Virol.">
        <title>Expression and structural characterization of a baculovirus ecdysteroid UDP-glucosyltransferase.</title>
        <authorList>
            <person name="Evans O.P."/>
            <person name="O'Reilly D.R."/>
        </authorList>
    </citation>
    <scope>FUNCTION</scope>
    <scope>GLYCOSYLATION</scope>
</reference>
<organism>
    <name type="scientific">Autographa californica nuclear polyhedrosis virus</name>
    <name type="common">AcMNPV</name>
    <dbReference type="NCBI Taxonomy" id="46015"/>
    <lineage>
        <taxon>Viruses</taxon>
        <taxon>Viruses incertae sedis</taxon>
        <taxon>Naldaviricetes</taxon>
        <taxon>Lefavirales</taxon>
        <taxon>Baculoviridae</taxon>
        <taxon>Alphabaculovirus</taxon>
        <taxon>Alphabaculovirus aucalifornicae</taxon>
    </lineage>
</organism>
<name>EGT_NPVAC</name>
<protein>
    <recommendedName>
        <fullName>Ecdysteroid UDP-glucosyltransferase</fullName>
        <ecNumber>2.4.1.-</ecNumber>
    </recommendedName>
</protein>
<evidence type="ECO:0000255" key="1"/>
<evidence type="ECO:0000269" key="2">
    <source>
    </source>
</evidence>
<evidence type="ECO:0000305" key="3"/>
<gene>
    <name type="primary">EGT</name>
    <name type="synonym">UGT21A1</name>
</gene>
<proteinExistence type="evidence at protein level"/>